<feature type="signal peptide" evidence="1">
    <location>
        <begin position="1"/>
        <end position="19"/>
    </location>
</feature>
<feature type="chain" id="PRO_5002105583" description="T cell receptor alpha variable 25" evidence="1">
    <location>
        <begin position="20"/>
        <end position="109"/>
    </location>
</feature>
<feature type="domain" description="Ig-like" evidence="2">
    <location>
        <begin position="20"/>
        <end position="109" status="greater than"/>
    </location>
</feature>
<feature type="glycosylation site" description="N-linked (GlcNAc...) asparagine" evidence="1">
    <location>
        <position position="42"/>
    </location>
</feature>
<feature type="glycosylation site" description="N-linked (GlcNAc...) asparagine" evidence="1">
    <location>
        <position position="89"/>
    </location>
</feature>
<feature type="disulfide bond" evidence="2">
    <location>
        <begin position="41"/>
        <end position="107"/>
    </location>
</feature>
<feature type="non-terminal residue">
    <location>
        <position position="109"/>
    </location>
</feature>
<gene>
    <name evidence="8" type="primary">TRAV25</name>
</gene>
<sequence length="109" mass="12388">MLLITSMLVLWMQLSQVNGQQVMQIPQYQHVQEGEDFTTYCNSSTTLSNIQWYKQRPGGHPVFLIQLVKSGEVKKQKRLTFQFGEAKKNSSLHITATQTTDVGTYFCAG</sequence>
<dbReference type="EMBL" id="AC245505">
    <property type="status" value="NOT_ANNOTATED_CDS"/>
    <property type="molecule type" value="Genomic_DNA"/>
</dbReference>
<dbReference type="SMR" id="A0A0B4J276"/>
<dbReference type="FunCoup" id="A0A0B4J276">
    <property type="interactions" value="318"/>
</dbReference>
<dbReference type="IMGT_GENE-DB" id="TRAV25"/>
<dbReference type="GlyCosmos" id="A0A0B4J276">
    <property type="glycosylation" value="2 sites, No reported glycans"/>
</dbReference>
<dbReference type="GlyGen" id="A0A0B4J276">
    <property type="glycosylation" value="2 sites"/>
</dbReference>
<dbReference type="BioMuta" id="TRAV25"/>
<dbReference type="Ensembl" id="ENST00000390454.2">
    <property type="protein sequence ID" value="ENSP00000452100.1"/>
    <property type="gene ID" value="ENSG00000211806.2"/>
</dbReference>
<dbReference type="AGR" id="HGNC:12122"/>
<dbReference type="GeneCards" id="TRAV25"/>
<dbReference type="HGNC" id="HGNC:12122">
    <property type="gene designation" value="TRAV25"/>
</dbReference>
<dbReference type="HPA" id="ENSG00000211806">
    <property type="expression patterns" value="Tissue enriched (lymphoid)"/>
</dbReference>
<dbReference type="neXtProt" id="NX_A0A0B4J276"/>
<dbReference type="OpenTargets" id="ENSG00000211806"/>
<dbReference type="VEuPathDB" id="HostDB:ENSG00000211806"/>
<dbReference type="GeneTree" id="ENSGT00940000163224"/>
<dbReference type="HOGENOM" id="CLU_077975_8_3_1"/>
<dbReference type="InParanoid" id="A0A0B4J276"/>
<dbReference type="OMA" id="CATTQCS"/>
<dbReference type="OrthoDB" id="9803478at2759"/>
<dbReference type="PAN-GO" id="A0A0B4J276">
    <property type="GO annotations" value="1 GO annotation based on evolutionary models"/>
</dbReference>
<dbReference type="PhylomeDB" id="A0A0B4J276"/>
<dbReference type="ChiTaRS" id="TRAV25">
    <property type="organism name" value="human"/>
</dbReference>
<dbReference type="Pharos" id="A0A0B4J276">
    <property type="development level" value="Tdark"/>
</dbReference>
<dbReference type="PRO" id="PR:A0A0B4J276"/>
<dbReference type="Proteomes" id="UP000005640">
    <property type="component" value="Chromosome 14"/>
</dbReference>
<dbReference type="RNAct" id="A0A0B4J276">
    <property type="molecule type" value="protein"/>
</dbReference>
<dbReference type="Bgee" id="ENSG00000211806">
    <property type="expression patterns" value="Expressed in granulocyte and 89 other cell types or tissues"/>
</dbReference>
<dbReference type="GO" id="GO:0042101">
    <property type="term" value="C:T cell receptor complex"/>
    <property type="evidence" value="ECO:0007669"/>
    <property type="project" value="UniProtKB-KW"/>
</dbReference>
<dbReference type="GO" id="GO:0002250">
    <property type="term" value="P:adaptive immune response"/>
    <property type="evidence" value="ECO:0007669"/>
    <property type="project" value="UniProtKB-KW"/>
</dbReference>
<dbReference type="GO" id="GO:0009617">
    <property type="term" value="P:response to bacterium"/>
    <property type="evidence" value="ECO:0000318"/>
    <property type="project" value="GO_Central"/>
</dbReference>
<dbReference type="Gene3D" id="2.60.40.10">
    <property type="entry name" value="Immunoglobulins"/>
    <property type="match status" value="1"/>
</dbReference>
<dbReference type="InterPro" id="IPR007110">
    <property type="entry name" value="Ig-like_dom"/>
</dbReference>
<dbReference type="InterPro" id="IPR036179">
    <property type="entry name" value="Ig-like_dom_sf"/>
</dbReference>
<dbReference type="InterPro" id="IPR013783">
    <property type="entry name" value="Ig-like_fold"/>
</dbReference>
<dbReference type="InterPro" id="IPR013106">
    <property type="entry name" value="Ig_V-set"/>
</dbReference>
<dbReference type="InterPro" id="IPR051896">
    <property type="entry name" value="TCR_alpha_variable"/>
</dbReference>
<dbReference type="PANTHER" id="PTHR19339:SF2">
    <property type="entry name" value="T CELL RECEPTOR ALPHA VARIABLE 22"/>
    <property type="match status" value="1"/>
</dbReference>
<dbReference type="PANTHER" id="PTHR19339">
    <property type="entry name" value="T CELL RECEPTOR ALPHA VARIABLE 39"/>
    <property type="match status" value="1"/>
</dbReference>
<dbReference type="Pfam" id="PF07686">
    <property type="entry name" value="V-set"/>
    <property type="match status" value="1"/>
</dbReference>
<dbReference type="SMART" id="SM00406">
    <property type="entry name" value="IGv"/>
    <property type="match status" value="1"/>
</dbReference>
<dbReference type="SUPFAM" id="SSF48726">
    <property type="entry name" value="Immunoglobulin"/>
    <property type="match status" value="1"/>
</dbReference>
<dbReference type="PROSITE" id="PS50835">
    <property type="entry name" value="IG_LIKE"/>
    <property type="match status" value="1"/>
</dbReference>
<protein>
    <recommendedName>
        <fullName evidence="8">T cell receptor alpha variable 25</fullName>
    </recommendedName>
</protein>
<reference key="1">
    <citation type="journal article" date="2003" name="Nature">
        <title>The DNA sequence and analysis of human chromosome 14.</title>
        <authorList>
            <person name="Heilig R."/>
            <person name="Eckenberg R."/>
            <person name="Petit J.-L."/>
            <person name="Fonknechten N."/>
            <person name="Da Silva C."/>
            <person name="Cattolico L."/>
            <person name="Levy M."/>
            <person name="Barbe V."/>
            <person name="De Berardinis V."/>
            <person name="Ureta-Vidal A."/>
            <person name="Pelletier E."/>
            <person name="Vico V."/>
            <person name="Anthouard V."/>
            <person name="Rowen L."/>
            <person name="Madan A."/>
            <person name="Qin S."/>
            <person name="Sun H."/>
            <person name="Du H."/>
            <person name="Pepin K."/>
            <person name="Artiguenave F."/>
            <person name="Robert C."/>
            <person name="Cruaud C."/>
            <person name="Bruels T."/>
            <person name="Jaillon O."/>
            <person name="Friedlander L."/>
            <person name="Samson G."/>
            <person name="Brottier P."/>
            <person name="Cure S."/>
            <person name="Segurens B."/>
            <person name="Aniere F."/>
            <person name="Samain S."/>
            <person name="Crespeau H."/>
            <person name="Abbasi N."/>
            <person name="Aiach N."/>
            <person name="Boscus D."/>
            <person name="Dickhoff R."/>
            <person name="Dors M."/>
            <person name="Dubois I."/>
            <person name="Friedman C."/>
            <person name="Gouyvenoux M."/>
            <person name="James R."/>
            <person name="Madan A."/>
            <person name="Mairey-Estrada B."/>
            <person name="Mangenot S."/>
            <person name="Martins N."/>
            <person name="Menard M."/>
            <person name="Oztas S."/>
            <person name="Ratcliffe A."/>
            <person name="Shaffer T."/>
            <person name="Trask B."/>
            <person name="Vacherie B."/>
            <person name="Bellemere C."/>
            <person name="Belser C."/>
            <person name="Besnard-Gonnet M."/>
            <person name="Bartol-Mavel D."/>
            <person name="Boutard M."/>
            <person name="Briez-Silla S."/>
            <person name="Combette S."/>
            <person name="Dufosse-Laurent V."/>
            <person name="Ferron C."/>
            <person name="Lechaplais C."/>
            <person name="Louesse C."/>
            <person name="Muselet D."/>
            <person name="Magdelenat G."/>
            <person name="Pateau E."/>
            <person name="Petit E."/>
            <person name="Sirvain-Trukniewicz P."/>
            <person name="Trybou A."/>
            <person name="Vega-Czarny N."/>
            <person name="Bataille E."/>
            <person name="Bluet E."/>
            <person name="Bordelais I."/>
            <person name="Dubois M."/>
            <person name="Dumont C."/>
            <person name="Guerin T."/>
            <person name="Haffray S."/>
            <person name="Hammadi R."/>
            <person name="Muanga J."/>
            <person name="Pellouin V."/>
            <person name="Robert D."/>
            <person name="Wunderle E."/>
            <person name="Gauguet G."/>
            <person name="Roy A."/>
            <person name="Sainte-Marthe L."/>
            <person name="Verdier J."/>
            <person name="Verdier-Discala C."/>
            <person name="Hillier L.W."/>
            <person name="Fulton L."/>
            <person name="McPherson J."/>
            <person name="Matsuda F."/>
            <person name="Wilson R."/>
            <person name="Scarpelli C."/>
            <person name="Gyapay G."/>
            <person name="Wincker P."/>
            <person name="Saurin W."/>
            <person name="Quetier F."/>
            <person name="Waterston R."/>
            <person name="Hood L."/>
            <person name="Weissenbach J."/>
        </authorList>
    </citation>
    <scope>NUCLEOTIDE SEQUENCE [LARGE SCALE GENOMIC DNA] (IMGT ALLELE TRAV25*01)</scope>
</reference>
<reference key="2">
    <citation type="book" date="2001" name="The T Cell Receptor FactsBook.">
        <title>The T Cell Receptor FactsBook.</title>
        <editorList>
            <person name="Lefranc M.P."/>
            <person name="Lefranc G."/>
        </editorList>
        <authorList>
            <person name="Lefranc M.P."/>
            <person name="Lefranc G."/>
        </authorList>
    </citation>
    <scope>NOMENCLATURE</scope>
</reference>
<reference key="3">
    <citation type="journal article" date="2004" name="Nat. Rev. Immunol.">
        <title>The many important facets of T-cell repertoire diversity.</title>
        <authorList>
            <person name="Nikolich-Zugich J."/>
            <person name="Slifka M.K."/>
            <person name="Messaoudi I."/>
        </authorList>
    </citation>
    <scope>REVIEW ON T CELL REPERTOIRE DIVERSITY</scope>
</reference>
<reference key="4">
    <citation type="journal article" date="2010" name="Cold Spring Harb. Perspect. Biol.">
        <title>Structural biology of the T-cell receptor: insights into receptor assembly, ligand recognition, and initiation of signaling.</title>
        <authorList>
            <person name="Wucherpfennig K.W."/>
            <person name="Gagnon E."/>
            <person name="Call M.J."/>
            <person name="Huseby E.S."/>
            <person name="Call M.E."/>
        </authorList>
    </citation>
    <scope>REVIEW ON T CELL RECEPTOR-CD3 COMPLEX ASSEMBLY</scope>
    <scope>SUBCELLULAR LOCATION</scope>
</reference>
<reference key="5">
    <citation type="journal article" date="2013" name="Nat. Rev. Immunol.">
        <title>T cell receptor signalling networks: branched, diversified and bounded.</title>
        <authorList>
            <person name="Brownlie R.J."/>
            <person name="Zamoyska R."/>
        </authorList>
    </citation>
    <scope>REVIEW ON T CELL RECEPTOR SIGNALING</scope>
</reference>
<reference key="6">
    <citation type="journal article" date="2014" name="Front. Immunol.">
        <title>Immunoglobulin and T Cell Receptor Genes: IMGT((R)) and the Birth and Rise of Immunoinformatics.</title>
        <authorList>
            <person name="Lefranc M.P."/>
        </authorList>
    </citation>
    <scope>NOMENCLATURE</scope>
</reference>
<reference key="7">
    <citation type="journal article" date="2015" name="Annu. Rev. Immunol.">
        <title>T cell antigen receptor recognition of antigen-presenting molecules.</title>
        <authorList>
            <person name="Rossjohn J."/>
            <person name="Gras S."/>
            <person name="Miles J.J."/>
            <person name="Turner S.J."/>
            <person name="Godfrey D.I."/>
            <person name="McCluskey J."/>
        </authorList>
    </citation>
    <scope>REVIEW ON FUNCTION</scope>
</reference>
<name>TVA25_HUMAN</name>
<proteinExistence type="inferred from homology"/>
<organism>
    <name type="scientific">Homo sapiens</name>
    <name type="common">Human</name>
    <dbReference type="NCBI Taxonomy" id="9606"/>
    <lineage>
        <taxon>Eukaryota</taxon>
        <taxon>Metazoa</taxon>
        <taxon>Chordata</taxon>
        <taxon>Craniata</taxon>
        <taxon>Vertebrata</taxon>
        <taxon>Euteleostomi</taxon>
        <taxon>Mammalia</taxon>
        <taxon>Eutheria</taxon>
        <taxon>Euarchontoglires</taxon>
        <taxon>Primates</taxon>
        <taxon>Haplorrhini</taxon>
        <taxon>Catarrhini</taxon>
        <taxon>Hominidae</taxon>
        <taxon>Homo</taxon>
    </lineage>
</organism>
<keyword id="KW-1064">Adaptive immunity</keyword>
<keyword id="KW-1003">Cell membrane</keyword>
<keyword id="KW-1015">Disulfide bond</keyword>
<keyword id="KW-0325">Glycoprotein</keyword>
<keyword id="KW-0391">Immunity</keyword>
<keyword id="KW-0393">Immunoglobulin domain</keyword>
<keyword id="KW-0472">Membrane</keyword>
<keyword id="KW-0675">Receptor</keyword>
<keyword id="KW-1185">Reference proteome</keyword>
<keyword id="KW-0732">Signal</keyword>
<keyword id="KW-1279">T cell receptor</keyword>
<evidence type="ECO:0000255" key="1"/>
<evidence type="ECO:0000255" key="2">
    <source>
        <dbReference type="PROSITE-ProRule" id="PRU00114"/>
    </source>
</evidence>
<evidence type="ECO:0000303" key="3">
    <source>
    </source>
</evidence>
<evidence type="ECO:0000303" key="4">
    <source>
    </source>
</evidence>
<evidence type="ECO:0000303" key="5">
    <source>
    </source>
</evidence>
<evidence type="ECO:0000303" key="6">
    <source>
    </source>
</evidence>
<evidence type="ECO:0000303" key="7">
    <source>
    </source>
</evidence>
<evidence type="ECO:0000303" key="8">
    <source ref="2"/>
</evidence>
<evidence type="ECO:0000305" key="9"/>
<comment type="function">
    <text evidence="3 5 6 7">V region of the variable domain of T cell receptor (TR) alpha chain that participates in the antigen recognition (PubMed:24600447). Alpha-beta T cell receptors are antigen specific receptors which are essential to the immune response and are present on the cell surface of T lymphocytes. Recognize peptide-major histocompatibility (MH) (pMH) complexes that are displayed by antigen presenting cells (APC), a prerequisite for efficient T cell adaptive immunity against pathogens (PubMed:25493333). Binding of alpha-beta TR to pMH complex initiates TR-CD3 clustering on the cell surface and intracellular activation of LCK that phosphorylates the ITAM motifs of CD3G, CD3D, CD3E and CD247 enabling the recruitment of ZAP70. In turn ZAP70 phosphorylates LAT, which recruits numerous signaling molecules to form the LAT signalosome. The LAT signalosome propagates signal branching to three major signaling pathways, the calcium, the mitogen-activated protein kinase (MAPK) kinase and the nuclear factor NF-kappa-B (NF-kB) pathways, leading to the mobilization of transcription factors that are critical for gene expression and essential for T cell growth and differentiation (PubMed:23524462). The T cell repertoire is generated in the thymus, by V-(D)-J rearrangement. This repertoire is then shaped by intrathymic selection events to generate a peripheral T cell pool of self-MH restricted, non-autoaggressive T cells. Post-thymic interaction of alpha-beta TR with the pMH complexes shapes TR structural and functional avidity (PubMed:15040585).</text>
</comment>
<comment type="subunit">
    <text evidence="4">Alpha-beta TR is a heterodimer composed of an alpha and beta chain; disulfide-linked. The alpha-beta TR is associated with the transmembrane signaling CD3 coreceptor proteins to form the TR-CD3 (TcR or TCR). The assembly of alpha-beta TR heterodimers with CD3 occurs in the endoplasmic reticulum where a single alpha-beta TR heterodimer associates with one CD3D-CD3E heterodimer, one CD3G-CD3E heterodimer and one CD247 homodimer forming a stable octameric structure. CD3D-CD3E and CD3G-CD3E heterodimers preferentially associate with TR alpha and TR beta chains, respectively. The association of the CD247 homodimer is the last step of TcR assembly in the endoplasmic reticulum and is required for transport to the cell surface.</text>
</comment>
<comment type="subcellular location">
    <subcellularLocation>
        <location evidence="4">Cell membrane</location>
    </subcellularLocation>
</comment>
<comment type="polymorphism">
    <text evidence="9">There are several alleles. The sequence shown is that of IMGT allele TRAV25*01.</text>
</comment>
<accession>A0A0B4J276</accession>